<protein>
    <recommendedName>
        <fullName evidence="1">Multidrug resistance protein MdtA</fullName>
    </recommendedName>
    <alternativeName>
        <fullName evidence="1">Multidrug transporter MdtA</fullName>
    </alternativeName>
</protein>
<proteinExistence type="inferred from homology"/>
<name>MDTA_YERPS</name>
<keyword id="KW-0997">Cell inner membrane</keyword>
<keyword id="KW-1003">Cell membrane</keyword>
<keyword id="KW-0472">Membrane</keyword>
<keyword id="KW-0732">Signal</keyword>
<keyword id="KW-0813">Transport</keyword>
<gene>
    <name evidence="1" type="primary">mdtA</name>
    <name type="ordered locus">YPTB2813</name>
</gene>
<feature type="signal peptide" evidence="1">
    <location>
        <begin position="1"/>
        <end position="20"/>
    </location>
</feature>
<feature type="chain" id="PRO_0000018707" description="Multidrug resistance protein MdtA">
    <location>
        <begin position="21"/>
        <end position="444"/>
    </location>
</feature>
<feature type="region of interest" description="Disordered" evidence="2">
    <location>
        <begin position="37"/>
        <end position="60"/>
    </location>
</feature>
<feature type="region of interest" description="Disordered" evidence="2">
    <location>
        <begin position="399"/>
        <end position="444"/>
    </location>
</feature>
<feature type="compositionally biased region" description="Polar residues" evidence="2">
    <location>
        <begin position="37"/>
        <end position="52"/>
    </location>
</feature>
<feature type="compositionally biased region" description="Low complexity" evidence="2">
    <location>
        <begin position="409"/>
        <end position="419"/>
    </location>
</feature>
<feature type="compositionally biased region" description="Polar residues" evidence="2">
    <location>
        <begin position="435"/>
        <end position="444"/>
    </location>
</feature>
<accession>Q668C7</accession>
<reference key="1">
    <citation type="journal article" date="2004" name="Proc. Natl. Acad. Sci. U.S.A.">
        <title>Insights into the evolution of Yersinia pestis through whole-genome comparison with Yersinia pseudotuberculosis.</title>
        <authorList>
            <person name="Chain P.S.G."/>
            <person name="Carniel E."/>
            <person name="Larimer F.W."/>
            <person name="Lamerdin J."/>
            <person name="Stoutland P.O."/>
            <person name="Regala W.M."/>
            <person name="Georgescu A.M."/>
            <person name="Vergez L.M."/>
            <person name="Land M.L."/>
            <person name="Motin V.L."/>
            <person name="Brubaker R.R."/>
            <person name="Fowler J."/>
            <person name="Hinnebusch J."/>
            <person name="Marceau M."/>
            <person name="Medigue C."/>
            <person name="Simonet M."/>
            <person name="Chenal-Francisque V."/>
            <person name="Souza B."/>
            <person name="Dacheux D."/>
            <person name="Elliott J.M."/>
            <person name="Derbise A."/>
            <person name="Hauser L.J."/>
            <person name="Garcia E."/>
        </authorList>
    </citation>
    <scope>NUCLEOTIDE SEQUENCE [LARGE SCALE GENOMIC DNA]</scope>
    <source>
        <strain>IP32953</strain>
    </source>
</reference>
<evidence type="ECO:0000255" key="1">
    <source>
        <dbReference type="HAMAP-Rule" id="MF_01422"/>
    </source>
</evidence>
<evidence type="ECO:0000256" key="2">
    <source>
        <dbReference type="SAM" id="MobiDB-lite"/>
    </source>
</evidence>
<evidence type="ECO:0000305" key="3"/>
<dbReference type="EMBL" id="BX936398">
    <property type="protein sequence ID" value="CAH22051.1"/>
    <property type="status" value="ALT_INIT"/>
    <property type="molecule type" value="Genomic_DNA"/>
</dbReference>
<dbReference type="RefSeq" id="WP_011192781.1">
    <property type="nucleotide sequence ID" value="NC_006155.1"/>
</dbReference>
<dbReference type="SMR" id="Q668C7"/>
<dbReference type="KEGG" id="ypo:BZ17_3818"/>
<dbReference type="KEGG" id="yps:YPTB2813"/>
<dbReference type="PATRIC" id="fig|273123.14.peg.4007"/>
<dbReference type="Proteomes" id="UP000001011">
    <property type="component" value="Chromosome"/>
</dbReference>
<dbReference type="GO" id="GO:1990281">
    <property type="term" value="C:efflux pump complex"/>
    <property type="evidence" value="ECO:0007669"/>
    <property type="project" value="TreeGrafter"/>
</dbReference>
<dbReference type="GO" id="GO:0005886">
    <property type="term" value="C:plasma membrane"/>
    <property type="evidence" value="ECO:0007669"/>
    <property type="project" value="UniProtKB-SubCell"/>
</dbReference>
<dbReference type="GO" id="GO:0015562">
    <property type="term" value="F:efflux transmembrane transporter activity"/>
    <property type="evidence" value="ECO:0007669"/>
    <property type="project" value="TreeGrafter"/>
</dbReference>
<dbReference type="FunFam" id="2.40.420.20:FF:000001">
    <property type="entry name" value="Efflux RND transporter periplasmic adaptor subunit"/>
    <property type="match status" value="1"/>
</dbReference>
<dbReference type="FunFam" id="1.10.287.470:FF:000005">
    <property type="entry name" value="Multidrug resistance protein MdtA"/>
    <property type="match status" value="1"/>
</dbReference>
<dbReference type="FunFam" id="2.40.30.170:FF:000006">
    <property type="entry name" value="Multidrug resistance protein MdtA"/>
    <property type="match status" value="1"/>
</dbReference>
<dbReference type="Gene3D" id="2.40.30.170">
    <property type="match status" value="1"/>
</dbReference>
<dbReference type="Gene3D" id="2.40.420.20">
    <property type="match status" value="1"/>
</dbReference>
<dbReference type="Gene3D" id="2.40.50.100">
    <property type="match status" value="1"/>
</dbReference>
<dbReference type="Gene3D" id="1.10.287.470">
    <property type="entry name" value="Helix hairpin bin"/>
    <property type="match status" value="1"/>
</dbReference>
<dbReference type="HAMAP" id="MF_01422">
    <property type="entry name" value="MdtA"/>
    <property type="match status" value="1"/>
</dbReference>
<dbReference type="InterPro" id="IPR032317">
    <property type="entry name" value="CusB_D23"/>
</dbReference>
<dbReference type="InterPro" id="IPR022824">
    <property type="entry name" value="Multidrug-R_MdtA"/>
</dbReference>
<dbReference type="InterPro" id="IPR006143">
    <property type="entry name" value="RND_pump_MFP"/>
</dbReference>
<dbReference type="NCBIfam" id="NF008589">
    <property type="entry name" value="PRK11556.1"/>
    <property type="match status" value="1"/>
</dbReference>
<dbReference type="NCBIfam" id="TIGR01730">
    <property type="entry name" value="RND_mfp"/>
    <property type="match status" value="1"/>
</dbReference>
<dbReference type="PANTHER" id="PTHR30469">
    <property type="entry name" value="MULTIDRUG RESISTANCE PROTEIN MDTA"/>
    <property type="match status" value="1"/>
</dbReference>
<dbReference type="PANTHER" id="PTHR30469:SF12">
    <property type="entry name" value="MULTIDRUG RESISTANCE PROTEIN MDTA"/>
    <property type="match status" value="1"/>
</dbReference>
<dbReference type="Pfam" id="PF16576">
    <property type="entry name" value="HlyD_D23"/>
    <property type="match status" value="1"/>
</dbReference>
<dbReference type="SUPFAM" id="SSF111369">
    <property type="entry name" value="HlyD-like secretion proteins"/>
    <property type="match status" value="1"/>
</dbReference>
<comment type="subunit">
    <text evidence="1">Part of a tripartite efflux system composed of MdtA, MdtB and MdtC.</text>
</comment>
<comment type="subcellular location">
    <subcellularLocation>
        <location evidence="1">Cell inner membrane</location>
        <topology evidence="1">Peripheral membrane protein</topology>
    </subcellularLocation>
</comment>
<comment type="similarity">
    <text evidence="1">Belongs to the membrane fusion protein (MFP) (TC 8.A.1) family.</text>
</comment>
<comment type="sequence caution" evidence="3">
    <conflict type="erroneous initiation">
        <sequence resource="EMBL-CDS" id="CAH22051"/>
    </conflict>
</comment>
<sequence length="444" mass="47591">MKSQSKRTSRLFVFVGVVVAIIIAVLSWRYFGTGSDNNTSGAQQSARGQDTSHGGRRNTPLAPVQAATATEQEVPRYLTGLGTVIAANTVTVTSRVDGELMALHFTEGQQVKAGDLLAEIDPRPYEVQLTQAQGQLAKDQATLDNARRDLARYQKLSKTGLISQQELDTQSSLVRQSEGSVKADQGAIDSAKLQLTYSRITAPISGRVGLKQVDVGNYITSGTATPIVVITQTHPVDVVFTLPESDIPAIMQAQKNAEKTHAIVPVEAWDRTNKQMLAQGYLLSIDNQIDTTTGTIKLKARFNNEDDVLFPNQFVNARIKVDLLQNAVVVPTAAVQMGSEGNFVWTLDDANRVSKHLVTTGIQDSQQVVIDAGLNAGQRVVTDGIDRLTEGVQVEVVTPRSANTDTNPASAEKAAAEAEGSTPHQGRGRPANAPARSTTAAEKS</sequence>
<organism>
    <name type="scientific">Yersinia pseudotuberculosis serotype I (strain IP32953)</name>
    <dbReference type="NCBI Taxonomy" id="273123"/>
    <lineage>
        <taxon>Bacteria</taxon>
        <taxon>Pseudomonadati</taxon>
        <taxon>Pseudomonadota</taxon>
        <taxon>Gammaproteobacteria</taxon>
        <taxon>Enterobacterales</taxon>
        <taxon>Yersiniaceae</taxon>
        <taxon>Yersinia</taxon>
    </lineage>
</organism>